<organism>
    <name type="scientific">Zymomonas mobilis subsp. mobilis (strain ATCC 31821 / ZM4 / CP4)</name>
    <dbReference type="NCBI Taxonomy" id="264203"/>
    <lineage>
        <taxon>Bacteria</taxon>
        <taxon>Pseudomonadati</taxon>
        <taxon>Pseudomonadota</taxon>
        <taxon>Alphaproteobacteria</taxon>
        <taxon>Sphingomonadales</taxon>
        <taxon>Zymomonadaceae</taxon>
        <taxon>Zymomonas</taxon>
    </lineage>
</organism>
<comment type="function">
    <text evidence="1">Catalyzes the acyloin condensation reaction between C atoms 2 and 3 of pyruvate and glyceraldehyde 3-phosphate to yield 1-deoxy-D-xylulose-5-phosphate (DXP).</text>
</comment>
<comment type="catalytic activity">
    <reaction evidence="1">
        <text>D-glyceraldehyde 3-phosphate + pyruvate + H(+) = 1-deoxy-D-xylulose 5-phosphate + CO2</text>
        <dbReference type="Rhea" id="RHEA:12605"/>
        <dbReference type="ChEBI" id="CHEBI:15361"/>
        <dbReference type="ChEBI" id="CHEBI:15378"/>
        <dbReference type="ChEBI" id="CHEBI:16526"/>
        <dbReference type="ChEBI" id="CHEBI:57792"/>
        <dbReference type="ChEBI" id="CHEBI:59776"/>
        <dbReference type="EC" id="2.2.1.7"/>
    </reaction>
</comment>
<comment type="cofactor">
    <cofactor evidence="1">
        <name>Mg(2+)</name>
        <dbReference type="ChEBI" id="CHEBI:18420"/>
    </cofactor>
    <text evidence="1">Binds 1 Mg(2+) ion per subunit.</text>
</comment>
<comment type="cofactor">
    <cofactor evidence="1">
        <name>thiamine diphosphate</name>
        <dbReference type="ChEBI" id="CHEBI:58937"/>
    </cofactor>
    <text evidence="1">Binds 1 thiamine pyrophosphate per subunit.</text>
</comment>
<comment type="pathway">
    <text evidence="1">Metabolic intermediate biosynthesis; 1-deoxy-D-xylulose 5-phosphate biosynthesis; 1-deoxy-D-xylulose 5-phosphate from D-glyceraldehyde 3-phosphate and pyruvate: step 1/1.</text>
</comment>
<comment type="subunit">
    <text evidence="1">Homodimer.</text>
</comment>
<comment type="similarity">
    <text evidence="1">Belongs to the transketolase family. DXPS subfamily.</text>
</comment>
<comment type="sequence caution" evidence="2">
    <conflict type="erroneous initiation">
        <sequence resource="EMBL-CDS" id="AAV90222"/>
    </conflict>
</comment>
<dbReference type="EC" id="2.2.1.7" evidence="1"/>
<dbReference type="EMBL" id="AE008692">
    <property type="protein sequence ID" value="AAV90222.1"/>
    <property type="status" value="ALT_INIT"/>
    <property type="molecule type" value="Genomic_DNA"/>
</dbReference>
<dbReference type="SMR" id="Q5NM38"/>
<dbReference type="STRING" id="264203.ZMO1598"/>
<dbReference type="KEGG" id="zmo:ZMO1598"/>
<dbReference type="eggNOG" id="COG1154">
    <property type="taxonomic scope" value="Bacteria"/>
</dbReference>
<dbReference type="HOGENOM" id="CLU_009227_1_4_5"/>
<dbReference type="UniPathway" id="UPA00064">
    <property type="reaction ID" value="UER00091"/>
</dbReference>
<dbReference type="Proteomes" id="UP000001173">
    <property type="component" value="Chromosome"/>
</dbReference>
<dbReference type="GO" id="GO:0008661">
    <property type="term" value="F:1-deoxy-D-xylulose-5-phosphate synthase activity"/>
    <property type="evidence" value="ECO:0007669"/>
    <property type="project" value="UniProtKB-UniRule"/>
</dbReference>
<dbReference type="GO" id="GO:0000287">
    <property type="term" value="F:magnesium ion binding"/>
    <property type="evidence" value="ECO:0007669"/>
    <property type="project" value="UniProtKB-UniRule"/>
</dbReference>
<dbReference type="GO" id="GO:0030976">
    <property type="term" value="F:thiamine pyrophosphate binding"/>
    <property type="evidence" value="ECO:0007669"/>
    <property type="project" value="UniProtKB-UniRule"/>
</dbReference>
<dbReference type="GO" id="GO:0052865">
    <property type="term" value="P:1-deoxy-D-xylulose 5-phosphate biosynthetic process"/>
    <property type="evidence" value="ECO:0007669"/>
    <property type="project" value="UniProtKB-UniPathway"/>
</dbReference>
<dbReference type="GO" id="GO:0019682">
    <property type="term" value="P:glyceraldehyde-3-phosphate metabolic process"/>
    <property type="evidence" value="ECO:0007669"/>
    <property type="project" value="UniProtKB-ARBA"/>
</dbReference>
<dbReference type="GO" id="GO:0016114">
    <property type="term" value="P:terpenoid biosynthetic process"/>
    <property type="evidence" value="ECO:0007669"/>
    <property type="project" value="UniProtKB-UniRule"/>
</dbReference>
<dbReference type="GO" id="GO:0009228">
    <property type="term" value="P:thiamine biosynthetic process"/>
    <property type="evidence" value="ECO:0007669"/>
    <property type="project" value="UniProtKB-UniRule"/>
</dbReference>
<dbReference type="CDD" id="cd02007">
    <property type="entry name" value="TPP_DXS"/>
    <property type="match status" value="1"/>
</dbReference>
<dbReference type="CDD" id="cd07033">
    <property type="entry name" value="TPP_PYR_DXS_TK_like"/>
    <property type="match status" value="1"/>
</dbReference>
<dbReference type="FunFam" id="3.40.50.920:FF:000002">
    <property type="entry name" value="1-deoxy-D-xylulose-5-phosphate synthase"/>
    <property type="match status" value="1"/>
</dbReference>
<dbReference type="FunFam" id="3.40.50.970:FF:000005">
    <property type="entry name" value="1-deoxy-D-xylulose-5-phosphate synthase"/>
    <property type="match status" value="1"/>
</dbReference>
<dbReference type="Gene3D" id="3.40.50.920">
    <property type="match status" value="1"/>
</dbReference>
<dbReference type="Gene3D" id="3.40.50.970">
    <property type="match status" value="2"/>
</dbReference>
<dbReference type="HAMAP" id="MF_00315">
    <property type="entry name" value="DXP_synth"/>
    <property type="match status" value="1"/>
</dbReference>
<dbReference type="InterPro" id="IPR005477">
    <property type="entry name" value="Dxylulose-5-P_synthase"/>
</dbReference>
<dbReference type="InterPro" id="IPR029061">
    <property type="entry name" value="THDP-binding"/>
</dbReference>
<dbReference type="InterPro" id="IPR009014">
    <property type="entry name" value="Transketo_C/PFOR_II"/>
</dbReference>
<dbReference type="InterPro" id="IPR005475">
    <property type="entry name" value="Transketolase-like_Pyr-bd"/>
</dbReference>
<dbReference type="InterPro" id="IPR033248">
    <property type="entry name" value="Transketolase_C"/>
</dbReference>
<dbReference type="InterPro" id="IPR049557">
    <property type="entry name" value="Transketolase_CS"/>
</dbReference>
<dbReference type="NCBIfam" id="TIGR00204">
    <property type="entry name" value="dxs"/>
    <property type="match status" value="1"/>
</dbReference>
<dbReference type="NCBIfam" id="NF003933">
    <property type="entry name" value="PRK05444.2-2"/>
    <property type="match status" value="1"/>
</dbReference>
<dbReference type="PANTHER" id="PTHR43322">
    <property type="entry name" value="1-D-DEOXYXYLULOSE 5-PHOSPHATE SYNTHASE-RELATED"/>
    <property type="match status" value="1"/>
</dbReference>
<dbReference type="PANTHER" id="PTHR43322:SF5">
    <property type="entry name" value="1-DEOXY-D-XYLULOSE-5-PHOSPHATE SYNTHASE, CHLOROPLASTIC"/>
    <property type="match status" value="1"/>
</dbReference>
<dbReference type="Pfam" id="PF13292">
    <property type="entry name" value="DXP_synthase_N"/>
    <property type="match status" value="1"/>
</dbReference>
<dbReference type="Pfam" id="PF02779">
    <property type="entry name" value="Transket_pyr"/>
    <property type="match status" value="1"/>
</dbReference>
<dbReference type="Pfam" id="PF02780">
    <property type="entry name" value="Transketolase_C"/>
    <property type="match status" value="1"/>
</dbReference>
<dbReference type="SMART" id="SM00861">
    <property type="entry name" value="Transket_pyr"/>
    <property type="match status" value="1"/>
</dbReference>
<dbReference type="SUPFAM" id="SSF52518">
    <property type="entry name" value="Thiamin diphosphate-binding fold (THDP-binding)"/>
    <property type="match status" value="2"/>
</dbReference>
<dbReference type="SUPFAM" id="SSF52922">
    <property type="entry name" value="TK C-terminal domain-like"/>
    <property type="match status" value="1"/>
</dbReference>
<dbReference type="PROSITE" id="PS00801">
    <property type="entry name" value="TRANSKETOLASE_1"/>
    <property type="match status" value="1"/>
</dbReference>
<reference key="1">
    <citation type="journal article" date="2005" name="Nat. Biotechnol.">
        <title>The genome sequence of the ethanologenic bacterium Zymomonas mobilis ZM4.</title>
        <authorList>
            <person name="Seo J.-S."/>
            <person name="Chong H."/>
            <person name="Park H.S."/>
            <person name="Yoon K.-O."/>
            <person name="Jung C."/>
            <person name="Kim J.J."/>
            <person name="Hong J.H."/>
            <person name="Kim H."/>
            <person name="Kim J.-H."/>
            <person name="Kil J.-I."/>
            <person name="Park C.J."/>
            <person name="Oh H.-M."/>
            <person name="Lee J.-S."/>
            <person name="Jin S.-J."/>
            <person name="Um H.-W."/>
            <person name="Lee H.-J."/>
            <person name="Oh S.-J."/>
            <person name="Kim J.Y."/>
            <person name="Kang H.L."/>
            <person name="Lee S.Y."/>
            <person name="Lee K.J."/>
            <person name="Kang H.S."/>
        </authorList>
    </citation>
    <scope>NUCLEOTIDE SEQUENCE [LARGE SCALE GENOMIC DNA]</scope>
    <source>
        <strain>ATCC 31821 / ZM4 / CP4</strain>
    </source>
</reference>
<evidence type="ECO:0000255" key="1">
    <source>
        <dbReference type="HAMAP-Rule" id="MF_00315"/>
    </source>
</evidence>
<evidence type="ECO:0000305" key="2"/>
<protein>
    <recommendedName>
        <fullName evidence="1">1-deoxy-D-xylulose-5-phosphate synthase 2</fullName>
        <ecNumber evidence="1">2.2.1.7</ecNumber>
    </recommendedName>
    <alternativeName>
        <fullName evidence="1">1-deoxyxylulose-5-phosphate synthase 2</fullName>
        <shortName evidence="1">DXP synthase 2</shortName>
        <shortName evidence="1">DXPS 2</shortName>
    </alternativeName>
</protein>
<accession>Q5NM38</accession>
<name>DXS2_ZYMMO</name>
<sequence>MFPNKKTPLLDKIKTPAELRQLDRNSLRQLADELRKETISAVGVTGGHLGSGLGVIELTVALHYVFNTPKDALVWDVGHQTYPHKILTGRRDRIRTLRQRDGLSGFTQRAESEYDAFGAAHSSTSISAALGFAMASKLSDSDDKAVAIIGDGSMTAGMAYEAMNNAKAAGKRLIVILNDNEMSISPPVGALSSYLSRLISSRPFMNLRDIMRGVVNRMPKGLATAARKADEYARGMATGGTFFEELGFYYVGPVDGHNLDQLIPVLENVRDAKDGPILVHVVTRKGQGYAPAEAAKDKYHAVQRLDVVSGKQAKAPPGPPSYTSVFSEQLIKEAKQDDKIVTITAAMPTGTGLDRFQQYFPERMFDVGIAEQHAVTFAAGLAAAGYKPFCCLYSTFLQRGYDQLVHDVAIQNLPVRFAVDRAGLVGADGATHAGSFDLAFMVNLPNMVVMAPSDERELANMVHSMAHYDQGPISVRYPRGNGVGVSLEGEKEILPIGKGRLIRRGKKVAILSLGTRLEESLKAADRLDAQGLSTSVADMRFAKPLDEALTRQLLKSHQVIITIEEGALGGFATQVLTMASDEGLMDDGLKIRTLRLPDRFQPQDKQERQYAEAGLDADGIVAAVTAALQRNSKPVEVVELTTKVTEDMTL</sequence>
<gene>
    <name evidence="1" type="primary">dxs2</name>
    <name type="ordered locus">ZMO1598</name>
</gene>
<feature type="chain" id="PRO_0000256511" description="1-deoxy-D-xylulose-5-phosphate synthase 2">
    <location>
        <begin position="1"/>
        <end position="650"/>
    </location>
</feature>
<feature type="binding site" evidence="1">
    <location>
        <position position="79"/>
    </location>
    <ligand>
        <name>thiamine diphosphate</name>
        <dbReference type="ChEBI" id="CHEBI:58937"/>
    </ligand>
</feature>
<feature type="binding site" evidence="1">
    <location>
        <begin position="120"/>
        <end position="122"/>
    </location>
    <ligand>
        <name>thiamine diphosphate</name>
        <dbReference type="ChEBI" id="CHEBI:58937"/>
    </ligand>
</feature>
<feature type="binding site" evidence="1">
    <location>
        <position position="151"/>
    </location>
    <ligand>
        <name>Mg(2+)</name>
        <dbReference type="ChEBI" id="CHEBI:18420"/>
    </ligand>
</feature>
<feature type="binding site" evidence="1">
    <location>
        <begin position="152"/>
        <end position="153"/>
    </location>
    <ligand>
        <name>thiamine diphosphate</name>
        <dbReference type="ChEBI" id="CHEBI:58937"/>
    </ligand>
</feature>
<feature type="binding site" evidence="1">
    <location>
        <position position="180"/>
    </location>
    <ligand>
        <name>Mg(2+)</name>
        <dbReference type="ChEBI" id="CHEBI:18420"/>
    </ligand>
</feature>
<feature type="binding site" evidence="1">
    <location>
        <position position="180"/>
    </location>
    <ligand>
        <name>thiamine diphosphate</name>
        <dbReference type="ChEBI" id="CHEBI:58937"/>
    </ligand>
</feature>
<feature type="binding site" evidence="1">
    <location>
        <position position="289"/>
    </location>
    <ligand>
        <name>thiamine diphosphate</name>
        <dbReference type="ChEBI" id="CHEBI:58937"/>
    </ligand>
</feature>
<feature type="binding site" evidence="1">
    <location>
        <position position="371"/>
    </location>
    <ligand>
        <name>thiamine diphosphate</name>
        <dbReference type="ChEBI" id="CHEBI:58937"/>
    </ligand>
</feature>
<proteinExistence type="inferred from homology"/>
<keyword id="KW-0414">Isoprene biosynthesis</keyword>
<keyword id="KW-0460">Magnesium</keyword>
<keyword id="KW-0479">Metal-binding</keyword>
<keyword id="KW-1185">Reference proteome</keyword>
<keyword id="KW-0784">Thiamine biosynthesis</keyword>
<keyword id="KW-0786">Thiamine pyrophosphate</keyword>
<keyword id="KW-0808">Transferase</keyword>